<dbReference type="SMR" id="P81993"/>
<dbReference type="GO" id="GO:0005576">
    <property type="term" value="C:extracellular region"/>
    <property type="evidence" value="ECO:0007669"/>
    <property type="project" value="UniProtKB-SubCell"/>
</dbReference>
<dbReference type="GO" id="GO:0005246">
    <property type="term" value="F:calcium channel regulator activity"/>
    <property type="evidence" value="ECO:0007669"/>
    <property type="project" value="UniProtKB-KW"/>
</dbReference>
<dbReference type="GO" id="GO:0090729">
    <property type="term" value="F:toxin activity"/>
    <property type="evidence" value="ECO:0007669"/>
    <property type="project" value="UniProtKB-KW"/>
</dbReference>
<dbReference type="Gene3D" id="3.40.33.10">
    <property type="entry name" value="CAP"/>
    <property type="match status" value="1"/>
</dbReference>
<dbReference type="InterPro" id="IPR014044">
    <property type="entry name" value="CAP_dom"/>
</dbReference>
<dbReference type="InterPro" id="IPR035940">
    <property type="entry name" value="CAP_sf"/>
</dbReference>
<dbReference type="Pfam" id="PF00188">
    <property type="entry name" value="CAP"/>
    <property type="match status" value="1"/>
</dbReference>
<dbReference type="SUPFAM" id="SSF55797">
    <property type="entry name" value="PR-1-like"/>
    <property type="match status" value="1"/>
</dbReference>
<protein>
    <recommendedName>
        <fullName>Cysteine-rich venom protein bucarin</fullName>
    </recommendedName>
</protein>
<sequence length="67" mass="7752">ESSNKRENQKQIVDKHNALRRSVRPTARNMLQMEWNSNAAQNAKRFADRCTFAHSPPHLRTVGIFSC</sequence>
<feature type="chain" id="PRO_0000211529" description="Cysteine-rich venom protein bucarin">
    <location>
        <begin position="1"/>
        <end position="67" status="greater than"/>
    </location>
</feature>
<feature type="domain" description="SCP">
    <location>
        <begin position="13"/>
        <end position="58"/>
    </location>
</feature>
<feature type="non-terminal residue" evidence="3">
    <location>
        <position position="67"/>
    </location>
</feature>
<name>CRVP_BUNCA</name>
<proteinExistence type="evidence at protein level"/>
<organism evidence="3">
    <name type="scientific">Bungarus candidus</name>
    <name type="common">Malayan krait</name>
    <dbReference type="NCBI Taxonomy" id="92438"/>
    <lineage>
        <taxon>Eukaryota</taxon>
        <taxon>Metazoa</taxon>
        <taxon>Chordata</taxon>
        <taxon>Craniata</taxon>
        <taxon>Vertebrata</taxon>
        <taxon>Euteleostomi</taxon>
        <taxon>Lepidosauria</taxon>
        <taxon>Squamata</taxon>
        <taxon>Bifurcata</taxon>
        <taxon>Unidentata</taxon>
        <taxon>Episquamata</taxon>
        <taxon>Toxicofera</taxon>
        <taxon>Serpentes</taxon>
        <taxon>Colubroidea</taxon>
        <taxon>Elapidae</taxon>
        <taxon>Bungarinae</taxon>
        <taxon>Bungarus</taxon>
    </lineage>
</organism>
<reference evidence="3" key="1">
    <citation type="submission" date="1999-08" db="UniProtKB">
        <authorList>
            <person name="Kini M.R."/>
        </authorList>
    </citation>
    <scope>PROTEIN SEQUENCE</scope>
    <source>
        <tissue evidence="3">Venom</tissue>
    </source>
</reference>
<accession>P81993</accession>
<evidence type="ECO:0000250" key="1"/>
<evidence type="ECO:0000250" key="2">
    <source>
        <dbReference type="UniProtKB" id="P84808"/>
    </source>
</evidence>
<evidence type="ECO:0000305" key="3"/>
<keyword id="KW-0108">Calcium channel impairing toxin</keyword>
<keyword id="KW-0903">Direct protein sequencing</keyword>
<keyword id="KW-1015">Disulfide bond</keyword>
<keyword id="KW-0872">Ion channel impairing toxin</keyword>
<keyword id="KW-0528">Neurotoxin</keyword>
<keyword id="KW-0964">Secreted</keyword>
<keyword id="KW-0800">Toxin</keyword>
<comment type="function">
    <text evidence="1">Blocks contraction of smooth muscle elicited by high potassium-induced depolarization, but does not block caffeine-stimulated contraction. May target voltage-gated calcium channels on smooth muscle (By similarity).</text>
</comment>
<comment type="subcellular location">
    <subcellularLocation>
        <location evidence="3">Secreted</location>
    </subcellularLocation>
</comment>
<comment type="tissue specificity">
    <text evidence="3">Expressed by the venom gland.</text>
</comment>
<comment type="PTM">
    <text evidence="2">Contains 8 disulfide bonds.</text>
</comment>
<comment type="similarity">
    <text evidence="3">Belongs to the CRISP family.</text>
</comment>